<sequence length="194" mass="22788">MKLLQHLTLIFCLLILTACSSRQQQPDNTNWRQQREKLESVTHWTISGKLAIITPEKKGSVRIRWQQNGDDYHLNLTSLLGTRVMEMRKTGEQIVIIDDKGQEYRGTDAEYLVYRLTGWQMPVYKLPMWIKGLPGDTDYQINPNGQVTQIKTAQWQMQYQTYQPVDGWMMPENITFKGQQTELRLVINEWKLAK</sequence>
<comment type="function">
    <text evidence="1">Plays a critical role in the incorporation of lipoproteins in the outer membrane after they are released by the LolA protein.</text>
</comment>
<comment type="subunit">
    <text evidence="1">Monomer.</text>
</comment>
<comment type="subcellular location">
    <subcellularLocation>
        <location evidence="1">Cell outer membrane</location>
        <topology evidence="1">Lipid-anchor</topology>
    </subcellularLocation>
</comment>
<comment type="similarity">
    <text evidence="1">Belongs to the LolB family.</text>
</comment>
<reference key="1">
    <citation type="submission" date="2009-05" db="EMBL/GenBank/DDBJ databases">
        <title>Complete sequence of Tolumonas auensis DSM 9187.</title>
        <authorList>
            <consortium name="US DOE Joint Genome Institute"/>
            <person name="Lucas S."/>
            <person name="Copeland A."/>
            <person name="Lapidus A."/>
            <person name="Glavina del Rio T."/>
            <person name="Tice H."/>
            <person name="Bruce D."/>
            <person name="Goodwin L."/>
            <person name="Pitluck S."/>
            <person name="Chertkov O."/>
            <person name="Brettin T."/>
            <person name="Detter J.C."/>
            <person name="Han C."/>
            <person name="Larimer F."/>
            <person name="Land M."/>
            <person name="Hauser L."/>
            <person name="Kyrpides N."/>
            <person name="Mikhailova N."/>
            <person name="Spring S."/>
            <person name="Beller H."/>
        </authorList>
    </citation>
    <scope>NUCLEOTIDE SEQUENCE [LARGE SCALE GENOMIC DNA]</scope>
    <source>
        <strain>DSM 9187 / NBRC 110442 / TA 4</strain>
    </source>
</reference>
<protein>
    <recommendedName>
        <fullName evidence="1">Outer-membrane lipoprotein LolB</fullName>
    </recommendedName>
</protein>
<accession>C4LBL3</accession>
<gene>
    <name evidence="1" type="primary">lolB</name>
    <name type="ordered locus">Tola_0820</name>
</gene>
<evidence type="ECO:0000255" key="1">
    <source>
        <dbReference type="HAMAP-Rule" id="MF_00233"/>
    </source>
</evidence>
<keyword id="KW-0998">Cell outer membrane</keyword>
<keyword id="KW-0143">Chaperone</keyword>
<keyword id="KW-0449">Lipoprotein</keyword>
<keyword id="KW-0472">Membrane</keyword>
<keyword id="KW-0564">Palmitate</keyword>
<keyword id="KW-0653">Protein transport</keyword>
<keyword id="KW-1185">Reference proteome</keyword>
<keyword id="KW-0732">Signal</keyword>
<keyword id="KW-0813">Transport</keyword>
<name>LOLB_TOLAT</name>
<proteinExistence type="inferred from homology"/>
<dbReference type="EMBL" id="CP001616">
    <property type="protein sequence ID" value="ACQ92448.1"/>
    <property type="molecule type" value="Genomic_DNA"/>
</dbReference>
<dbReference type="RefSeq" id="WP_012729047.1">
    <property type="nucleotide sequence ID" value="NC_012691.1"/>
</dbReference>
<dbReference type="SMR" id="C4LBL3"/>
<dbReference type="STRING" id="595494.Tola_0820"/>
<dbReference type="KEGG" id="tau:Tola_0820"/>
<dbReference type="eggNOG" id="COG3017">
    <property type="taxonomic scope" value="Bacteria"/>
</dbReference>
<dbReference type="HOGENOM" id="CLU_092816_1_0_6"/>
<dbReference type="OrthoDB" id="9797618at2"/>
<dbReference type="Proteomes" id="UP000009073">
    <property type="component" value="Chromosome"/>
</dbReference>
<dbReference type="GO" id="GO:0009279">
    <property type="term" value="C:cell outer membrane"/>
    <property type="evidence" value="ECO:0007669"/>
    <property type="project" value="UniProtKB-SubCell"/>
</dbReference>
<dbReference type="GO" id="GO:0044874">
    <property type="term" value="P:lipoprotein localization to outer membrane"/>
    <property type="evidence" value="ECO:0007669"/>
    <property type="project" value="UniProtKB-UniRule"/>
</dbReference>
<dbReference type="GO" id="GO:0015031">
    <property type="term" value="P:protein transport"/>
    <property type="evidence" value="ECO:0007669"/>
    <property type="project" value="UniProtKB-KW"/>
</dbReference>
<dbReference type="CDD" id="cd16326">
    <property type="entry name" value="LolB"/>
    <property type="match status" value="1"/>
</dbReference>
<dbReference type="Gene3D" id="2.50.20.10">
    <property type="entry name" value="Lipoprotein localisation LolA/LolB/LppX"/>
    <property type="match status" value="1"/>
</dbReference>
<dbReference type="HAMAP" id="MF_00233">
    <property type="entry name" value="LolB"/>
    <property type="match status" value="1"/>
</dbReference>
<dbReference type="InterPro" id="IPR029046">
    <property type="entry name" value="LolA/LolB/LppX"/>
</dbReference>
<dbReference type="InterPro" id="IPR004565">
    <property type="entry name" value="OM_lipoprot_LolB"/>
</dbReference>
<dbReference type="NCBIfam" id="TIGR00548">
    <property type="entry name" value="lolB"/>
    <property type="match status" value="1"/>
</dbReference>
<dbReference type="Pfam" id="PF03550">
    <property type="entry name" value="LolB"/>
    <property type="match status" value="1"/>
</dbReference>
<dbReference type="SUPFAM" id="SSF89392">
    <property type="entry name" value="Prokaryotic lipoproteins and lipoprotein localization factors"/>
    <property type="match status" value="1"/>
</dbReference>
<dbReference type="PROSITE" id="PS51257">
    <property type="entry name" value="PROKAR_LIPOPROTEIN"/>
    <property type="match status" value="1"/>
</dbReference>
<organism>
    <name type="scientific">Tolumonas auensis (strain DSM 9187 / NBRC 110442 / TA 4)</name>
    <dbReference type="NCBI Taxonomy" id="595494"/>
    <lineage>
        <taxon>Bacteria</taxon>
        <taxon>Pseudomonadati</taxon>
        <taxon>Pseudomonadota</taxon>
        <taxon>Gammaproteobacteria</taxon>
        <taxon>Aeromonadales</taxon>
        <taxon>Aeromonadaceae</taxon>
        <taxon>Tolumonas</taxon>
    </lineage>
</organism>
<feature type="signal peptide" evidence="1">
    <location>
        <begin position="1"/>
        <end position="18"/>
    </location>
</feature>
<feature type="chain" id="PRO_1000204388" description="Outer-membrane lipoprotein LolB">
    <location>
        <begin position="19"/>
        <end position="194"/>
    </location>
</feature>
<feature type="lipid moiety-binding region" description="N-palmitoyl cysteine" evidence="1">
    <location>
        <position position="19"/>
    </location>
</feature>
<feature type="lipid moiety-binding region" description="S-diacylglycerol cysteine" evidence="1">
    <location>
        <position position="19"/>
    </location>
</feature>